<protein>
    <recommendedName>
        <fullName evidence="1">Small ribosomal subunit protein uS2</fullName>
    </recommendedName>
    <alternativeName>
        <fullName evidence="3">30S ribosomal protein S2</fullName>
    </alternativeName>
</protein>
<sequence>MAVVTMRELLDAGVHFGHQTRRWNPKMRRFIFTDRNGIYIIDLQQTLTYIDEAYEFVKETVAHGGNILFVGTKKQAQEAVANEAERVGMPYVNHRWLGGMLTNFQTVSKRLARMKELQAMDAAEDGYQGRTKKEILLLNREREKLERVLGGIADMTKVPSAMWVVDTNKEHIAVSEAKKLGIPVVAILDTNCDPDEVQYPVPGNDDAIRSANLLTSIISSAVEEGRKARAERQAAAAKDAAGDTGKSEADAEAVKAEAAAEEKAETTEA</sequence>
<gene>
    <name evidence="1" type="primary">rpsB</name>
    <name type="ordered locus">cu0818</name>
</gene>
<reference key="1">
    <citation type="journal article" date="2008" name="J. Biotechnol.">
        <title>The lifestyle of Corynebacterium urealyticum derived from its complete genome sequence established by pyrosequencing.</title>
        <authorList>
            <person name="Tauch A."/>
            <person name="Trost E."/>
            <person name="Tilker A."/>
            <person name="Ludewig U."/>
            <person name="Schneiker S."/>
            <person name="Goesmann A."/>
            <person name="Arnold W."/>
            <person name="Bekel T."/>
            <person name="Brinkrolf K."/>
            <person name="Brune I."/>
            <person name="Goetker S."/>
            <person name="Kalinowski J."/>
            <person name="Kamp P.-B."/>
            <person name="Lobo F.P."/>
            <person name="Viehoever P."/>
            <person name="Weisshaar B."/>
            <person name="Soriano F."/>
            <person name="Droege M."/>
            <person name="Puehler A."/>
        </authorList>
    </citation>
    <scope>NUCLEOTIDE SEQUENCE [LARGE SCALE GENOMIC DNA]</scope>
    <source>
        <strain>ATCC 43042 / DSM 7109</strain>
    </source>
</reference>
<dbReference type="EMBL" id="AM942444">
    <property type="protein sequence ID" value="CAQ04778.1"/>
    <property type="molecule type" value="Genomic_DNA"/>
</dbReference>
<dbReference type="RefSeq" id="WP_012360067.1">
    <property type="nucleotide sequence ID" value="NC_010545.1"/>
</dbReference>
<dbReference type="SMR" id="B1VG89"/>
<dbReference type="STRING" id="504474.cu0818"/>
<dbReference type="GeneID" id="60603595"/>
<dbReference type="KEGG" id="cur:cu0818"/>
<dbReference type="eggNOG" id="COG0052">
    <property type="taxonomic scope" value="Bacteria"/>
</dbReference>
<dbReference type="HOGENOM" id="CLU_040318_2_2_11"/>
<dbReference type="Proteomes" id="UP000001727">
    <property type="component" value="Chromosome"/>
</dbReference>
<dbReference type="GO" id="GO:0022627">
    <property type="term" value="C:cytosolic small ribosomal subunit"/>
    <property type="evidence" value="ECO:0007669"/>
    <property type="project" value="TreeGrafter"/>
</dbReference>
<dbReference type="GO" id="GO:0003735">
    <property type="term" value="F:structural constituent of ribosome"/>
    <property type="evidence" value="ECO:0007669"/>
    <property type="project" value="InterPro"/>
</dbReference>
<dbReference type="GO" id="GO:0006412">
    <property type="term" value="P:translation"/>
    <property type="evidence" value="ECO:0007669"/>
    <property type="project" value="UniProtKB-UniRule"/>
</dbReference>
<dbReference type="CDD" id="cd01425">
    <property type="entry name" value="RPS2"/>
    <property type="match status" value="1"/>
</dbReference>
<dbReference type="FunFam" id="1.10.287.610:FF:000001">
    <property type="entry name" value="30S ribosomal protein S2"/>
    <property type="match status" value="1"/>
</dbReference>
<dbReference type="Gene3D" id="3.40.50.10490">
    <property type="entry name" value="Glucose-6-phosphate isomerase like protein, domain 1"/>
    <property type="match status" value="1"/>
</dbReference>
<dbReference type="Gene3D" id="1.10.287.610">
    <property type="entry name" value="Helix hairpin bin"/>
    <property type="match status" value="1"/>
</dbReference>
<dbReference type="HAMAP" id="MF_00291_B">
    <property type="entry name" value="Ribosomal_uS2_B"/>
    <property type="match status" value="1"/>
</dbReference>
<dbReference type="InterPro" id="IPR001865">
    <property type="entry name" value="Ribosomal_uS2"/>
</dbReference>
<dbReference type="InterPro" id="IPR005706">
    <property type="entry name" value="Ribosomal_uS2_bac/mit/plastid"/>
</dbReference>
<dbReference type="InterPro" id="IPR018130">
    <property type="entry name" value="Ribosomal_uS2_CS"/>
</dbReference>
<dbReference type="InterPro" id="IPR023591">
    <property type="entry name" value="Ribosomal_uS2_flav_dom_sf"/>
</dbReference>
<dbReference type="NCBIfam" id="TIGR01011">
    <property type="entry name" value="rpsB_bact"/>
    <property type="match status" value="1"/>
</dbReference>
<dbReference type="PANTHER" id="PTHR12534">
    <property type="entry name" value="30S RIBOSOMAL PROTEIN S2 PROKARYOTIC AND ORGANELLAR"/>
    <property type="match status" value="1"/>
</dbReference>
<dbReference type="PANTHER" id="PTHR12534:SF0">
    <property type="entry name" value="SMALL RIBOSOMAL SUBUNIT PROTEIN US2M"/>
    <property type="match status" value="1"/>
</dbReference>
<dbReference type="Pfam" id="PF00318">
    <property type="entry name" value="Ribosomal_S2"/>
    <property type="match status" value="1"/>
</dbReference>
<dbReference type="PRINTS" id="PR00395">
    <property type="entry name" value="RIBOSOMALS2"/>
</dbReference>
<dbReference type="SUPFAM" id="SSF52313">
    <property type="entry name" value="Ribosomal protein S2"/>
    <property type="match status" value="1"/>
</dbReference>
<dbReference type="PROSITE" id="PS00962">
    <property type="entry name" value="RIBOSOMAL_S2_1"/>
    <property type="match status" value="1"/>
</dbReference>
<proteinExistence type="inferred from homology"/>
<name>RS2_CORU7</name>
<organism>
    <name type="scientific">Corynebacterium urealyticum (strain ATCC 43042 / DSM 7109)</name>
    <dbReference type="NCBI Taxonomy" id="504474"/>
    <lineage>
        <taxon>Bacteria</taxon>
        <taxon>Bacillati</taxon>
        <taxon>Actinomycetota</taxon>
        <taxon>Actinomycetes</taxon>
        <taxon>Mycobacteriales</taxon>
        <taxon>Corynebacteriaceae</taxon>
        <taxon>Corynebacterium</taxon>
    </lineage>
</organism>
<accession>B1VG89</accession>
<evidence type="ECO:0000255" key="1">
    <source>
        <dbReference type="HAMAP-Rule" id="MF_00291"/>
    </source>
</evidence>
<evidence type="ECO:0000256" key="2">
    <source>
        <dbReference type="SAM" id="MobiDB-lite"/>
    </source>
</evidence>
<evidence type="ECO:0000305" key="3"/>
<comment type="similarity">
    <text evidence="1">Belongs to the universal ribosomal protein uS2 family.</text>
</comment>
<feature type="chain" id="PRO_1000115010" description="Small ribosomal subunit protein uS2">
    <location>
        <begin position="1"/>
        <end position="269"/>
    </location>
</feature>
<feature type="region of interest" description="Disordered" evidence="2">
    <location>
        <begin position="228"/>
        <end position="269"/>
    </location>
</feature>
<feature type="compositionally biased region" description="Low complexity" evidence="2">
    <location>
        <begin position="233"/>
        <end position="244"/>
    </location>
</feature>
<feature type="compositionally biased region" description="Basic and acidic residues" evidence="2">
    <location>
        <begin position="245"/>
        <end position="269"/>
    </location>
</feature>
<keyword id="KW-1185">Reference proteome</keyword>
<keyword id="KW-0687">Ribonucleoprotein</keyword>
<keyword id="KW-0689">Ribosomal protein</keyword>